<proteinExistence type="inferred from homology"/>
<gene>
    <name evidence="1" type="primary">kefC</name>
    <name type="ordered locus">SEN0088</name>
</gene>
<name>KEFC_SALEP</name>
<dbReference type="EMBL" id="AM933172">
    <property type="protein sequence ID" value="CAR31675.1"/>
    <property type="molecule type" value="Genomic_DNA"/>
</dbReference>
<dbReference type="RefSeq" id="WP_000377163.1">
    <property type="nucleotide sequence ID" value="NC_011294.1"/>
</dbReference>
<dbReference type="SMR" id="B5R1S4"/>
<dbReference type="KEGG" id="set:SEN0088"/>
<dbReference type="HOGENOM" id="CLU_005126_9_3_6"/>
<dbReference type="Proteomes" id="UP000000613">
    <property type="component" value="Chromosome"/>
</dbReference>
<dbReference type="GO" id="GO:0005886">
    <property type="term" value="C:plasma membrane"/>
    <property type="evidence" value="ECO:0007669"/>
    <property type="project" value="UniProtKB-SubCell"/>
</dbReference>
<dbReference type="GO" id="GO:0019899">
    <property type="term" value="F:enzyme binding"/>
    <property type="evidence" value="ECO:0007669"/>
    <property type="project" value="InterPro"/>
</dbReference>
<dbReference type="GO" id="GO:0015503">
    <property type="term" value="F:glutathione-regulated potassium exporter activity"/>
    <property type="evidence" value="ECO:0007669"/>
    <property type="project" value="UniProtKB-UniRule"/>
</dbReference>
<dbReference type="GO" id="GO:0015643">
    <property type="term" value="F:toxic substance binding"/>
    <property type="evidence" value="ECO:0007669"/>
    <property type="project" value="InterPro"/>
</dbReference>
<dbReference type="GO" id="GO:1902600">
    <property type="term" value="P:proton transmembrane transport"/>
    <property type="evidence" value="ECO:0007669"/>
    <property type="project" value="InterPro"/>
</dbReference>
<dbReference type="GO" id="GO:0051595">
    <property type="term" value="P:response to methylglyoxal"/>
    <property type="evidence" value="ECO:0007669"/>
    <property type="project" value="InterPro"/>
</dbReference>
<dbReference type="FunFam" id="1.20.1530.20:FF:000001">
    <property type="entry name" value="Glutathione-regulated potassium-efflux system protein KefB"/>
    <property type="match status" value="1"/>
</dbReference>
<dbReference type="FunFam" id="3.40.50.720:FF:000036">
    <property type="entry name" value="Glutathione-regulated potassium-efflux system protein KefB"/>
    <property type="match status" value="1"/>
</dbReference>
<dbReference type="Gene3D" id="1.20.1530.20">
    <property type="match status" value="1"/>
</dbReference>
<dbReference type="Gene3D" id="3.40.50.720">
    <property type="entry name" value="NAD(P)-binding Rossmann-like Domain"/>
    <property type="match status" value="1"/>
</dbReference>
<dbReference type="HAMAP" id="MF_01413">
    <property type="entry name" value="K_H_efflux_KefC"/>
    <property type="match status" value="1"/>
</dbReference>
<dbReference type="InterPro" id="IPR006153">
    <property type="entry name" value="Cation/H_exchanger_TM"/>
</dbReference>
<dbReference type="InterPro" id="IPR004771">
    <property type="entry name" value="K/H_exchanger"/>
</dbReference>
<dbReference type="InterPro" id="IPR023941">
    <property type="entry name" value="K_H_efflux_KefC"/>
</dbReference>
<dbReference type="InterPro" id="IPR006036">
    <property type="entry name" value="K_uptake_TrkA"/>
</dbReference>
<dbReference type="InterPro" id="IPR038770">
    <property type="entry name" value="Na+/solute_symporter_sf"/>
</dbReference>
<dbReference type="InterPro" id="IPR036291">
    <property type="entry name" value="NAD(P)-bd_dom_sf"/>
</dbReference>
<dbReference type="InterPro" id="IPR003148">
    <property type="entry name" value="RCK_N"/>
</dbReference>
<dbReference type="NCBIfam" id="TIGR00932">
    <property type="entry name" value="2a37"/>
    <property type="match status" value="1"/>
</dbReference>
<dbReference type="NCBIfam" id="NF002924">
    <property type="entry name" value="PRK03562.1"/>
    <property type="match status" value="1"/>
</dbReference>
<dbReference type="PANTHER" id="PTHR46157:SF3">
    <property type="entry name" value="GLUTATHIONE-REGULATED POTASSIUM-EFFLUX SYSTEM PROTEIN KEFC"/>
    <property type="match status" value="1"/>
</dbReference>
<dbReference type="PANTHER" id="PTHR46157">
    <property type="entry name" value="K(+) EFFLUX ANTIPORTER 3, CHLOROPLASTIC"/>
    <property type="match status" value="1"/>
</dbReference>
<dbReference type="Pfam" id="PF00999">
    <property type="entry name" value="Na_H_Exchanger"/>
    <property type="match status" value="1"/>
</dbReference>
<dbReference type="Pfam" id="PF02254">
    <property type="entry name" value="TrkA_N"/>
    <property type="match status" value="1"/>
</dbReference>
<dbReference type="PRINTS" id="PR00335">
    <property type="entry name" value="KUPTAKETRKA"/>
</dbReference>
<dbReference type="SUPFAM" id="SSF51735">
    <property type="entry name" value="NAD(P)-binding Rossmann-fold domains"/>
    <property type="match status" value="1"/>
</dbReference>
<dbReference type="PROSITE" id="PS51201">
    <property type="entry name" value="RCK_N"/>
    <property type="match status" value="1"/>
</dbReference>
<accession>B5R1S4</accession>
<sequence length="620" mass="67068">MDSHTLLQALIYLGSAALIVPIAVRLGLGSVLGYLIAGCIIGPWGLRLVTDAESILHFAEIGVVLMLFVIGLELDPQRLWKLRASVFGGGALQMVVCGGLIGLFCMFLGLRWQVAELIGMTLALSSTAIAMQAMNERNLTVSQVGRSAFAVLLFQDIAAIPLVAMIPLLAASGASTTLGAFALSALKVAGALALVVLLGRYVTRPALRFVARSGLREVFSAVALFLVFGFGLLLEEVGLSMAMGAFLAGVLLASSEYRHALESDIEPFKGLLLGLFFIGVGMSIDFGTLVENPLRILLLLAGFLAIKIVMLWLVARPLGVPAKQRRWFAVLLGQGSEFAFVVFGAAQMADVLEPEWAKALTLAVALSMAATPIFLVLLTRMEKTATGEAREADEIDEEQPRVIVAGFGRFGQIAGRLLLSSGVKMVVLDHDPDHIETLRKFGMKVFYGDATRMDLLESAGAAKAEVLINAIDDPQTNLQLSELVKSHFPHLQIIARARDVDHYIRLRQAGVAMPERETFEGALKSGRQALEALGLGRYEARERADLFRHFNTRMVEEMAKGENDPLSRAAAYKRTSAMLSEIITEDREHLSLIQRHGWQGTAEGKHSGEAADEPEVKPSI</sequence>
<feature type="chain" id="PRO_1000145547" description="Glutathione-regulated potassium-efflux system protein KefC">
    <location>
        <begin position="1"/>
        <end position="620"/>
    </location>
</feature>
<feature type="transmembrane region" description="Helical" evidence="1">
    <location>
        <begin position="4"/>
        <end position="24"/>
    </location>
</feature>
<feature type="transmembrane region" description="Helical" evidence="1">
    <location>
        <begin position="26"/>
        <end position="46"/>
    </location>
</feature>
<feature type="transmembrane region" description="Helical" evidence="1">
    <location>
        <begin position="54"/>
        <end position="74"/>
    </location>
</feature>
<feature type="transmembrane region" description="Helical" evidence="1">
    <location>
        <begin position="90"/>
        <end position="110"/>
    </location>
</feature>
<feature type="transmembrane region" description="Helical" evidence="1">
    <location>
        <begin position="114"/>
        <end position="134"/>
    </location>
</feature>
<feature type="transmembrane region" description="Helical" evidence="1">
    <location>
        <begin position="149"/>
        <end position="169"/>
    </location>
</feature>
<feature type="transmembrane region" description="Helical" evidence="1">
    <location>
        <begin position="178"/>
        <end position="198"/>
    </location>
</feature>
<feature type="transmembrane region" description="Helical" evidence="1">
    <location>
        <begin position="218"/>
        <end position="238"/>
    </location>
</feature>
<feature type="transmembrane region" description="Helical" evidence="1">
    <location>
        <begin position="270"/>
        <end position="290"/>
    </location>
</feature>
<feature type="transmembrane region" description="Helical" evidence="1">
    <location>
        <begin position="294"/>
        <end position="314"/>
    </location>
</feature>
<feature type="transmembrane region" description="Helical" evidence="1">
    <location>
        <begin position="327"/>
        <end position="347"/>
    </location>
</feature>
<feature type="transmembrane region" description="Helical" evidence="1">
    <location>
        <begin position="359"/>
        <end position="379"/>
    </location>
</feature>
<feature type="domain" description="RCK N-terminal" evidence="2">
    <location>
        <begin position="399"/>
        <end position="518"/>
    </location>
</feature>
<feature type="region of interest" description="Disordered" evidence="3">
    <location>
        <begin position="599"/>
        <end position="620"/>
    </location>
</feature>
<organism>
    <name type="scientific">Salmonella enteritidis PT4 (strain P125109)</name>
    <dbReference type="NCBI Taxonomy" id="550537"/>
    <lineage>
        <taxon>Bacteria</taxon>
        <taxon>Pseudomonadati</taxon>
        <taxon>Pseudomonadota</taxon>
        <taxon>Gammaproteobacteria</taxon>
        <taxon>Enterobacterales</taxon>
        <taxon>Enterobacteriaceae</taxon>
        <taxon>Salmonella</taxon>
    </lineage>
</organism>
<comment type="function">
    <text evidence="1">Pore-forming subunit of a potassium efflux system that confers protection against electrophiles. Catalyzes K(+)/H(+) antiport.</text>
</comment>
<comment type="subunit">
    <text evidence="1">Homodimer. Interacts with the regulatory subunit KefF.</text>
</comment>
<comment type="subcellular location">
    <subcellularLocation>
        <location evidence="1">Cell inner membrane</location>
        <topology evidence="1">Multi-pass membrane protein</topology>
    </subcellularLocation>
</comment>
<comment type="similarity">
    <text evidence="1">Belongs to the monovalent cation:proton antiporter 2 (CPA2) transporter (TC 2.A.37) family. KefC subfamily.</text>
</comment>
<protein>
    <recommendedName>
        <fullName evidence="1">Glutathione-regulated potassium-efflux system protein KefC</fullName>
    </recommendedName>
    <alternativeName>
        <fullName evidence="1">K(+)/H(+) antiporter</fullName>
    </alternativeName>
</protein>
<reference key="1">
    <citation type="journal article" date="2008" name="Genome Res.">
        <title>Comparative genome analysis of Salmonella enteritidis PT4 and Salmonella gallinarum 287/91 provides insights into evolutionary and host adaptation pathways.</title>
        <authorList>
            <person name="Thomson N.R."/>
            <person name="Clayton D.J."/>
            <person name="Windhorst D."/>
            <person name="Vernikos G."/>
            <person name="Davidson S."/>
            <person name="Churcher C."/>
            <person name="Quail M.A."/>
            <person name="Stevens M."/>
            <person name="Jones M.A."/>
            <person name="Watson M."/>
            <person name="Barron A."/>
            <person name="Layton A."/>
            <person name="Pickard D."/>
            <person name="Kingsley R.A."/>
            <person name="Bignell A."/>
            <person name="Clark L."/>
            <person name="Harris B."/>
            <person name="Ormond D."/>
            <person name="Abdellah Z."/>
            <person name="Brooks K."/>
            <person name="Cherevach I."/>
            <person name="Chillingworth T."/>
            <person name="Woodward J."/>
            <person name="Norberczak H."/>
            <person name="Lord A."/>
            <person name="Arrowsmith C."/>
            <person name="Jagels K."/>
            <person name="Moule S."/>
            <person name="Mungall K."/>
            <person name="Saunders M."/>
            <person name="Whitehead S."/>
            <person name="Chabalgoity J.A."/>
            <person name="Maskell D."/>
            <person name="Humphreys T."/>
            <person name="Roberts M."/>
            <person name="Barrow P.A."/>
            <person name="Dougan G."/>
            <person name="Parkhill J."/>
        </authorList>
    </citation>
    <scope>NUCLEOTIDE SEQUENCE [LARGE SCALE GENOMIC DNA]</scope>
    <source>
        <strain>P125109</strain>
    </source>
</reference>
<keyword id="KW-0050">Antiport</keyword>
<keyword id="KW-0997">Cell inner membrane</keyword>
<keyword id="KW-1003">Cell membrane</keyword>
<keyword id="KW-0406">Ion transport</keyword>
<keyword id="KW-0472">Membrane</keyword>
<keyword id="KW-0630">Potassium</keyword>
<keyword id="KW-0633">Potassium transport</keyword>
<keyword id="KW-0812">Transmembrane</keyword>
<keyword id="KW-1133">Transmembrane helix</keyword>
<keyword id="KW-0813">Transport</keyword>
<evidence type="ECO:0000255" key="1">
    <source>
        <dbReference type="HAMAP-Rule" id="MF_01413"/>
    </source>
</evidence>
<evidence type="ECO:0000255" key="2">
    <source>
        <dbReference type="PROSITE-ProRule" id="PRU00543"/>
    </source>
</evidence>
<evidence type="ECO:0000256" key="3">
    <source>
        <dbReference type="SAM" id="MobiDB-lite"/>
    </source>
</evidence>